<sequence>MEIIKDIVSLIASILIFLGSIIALISAIGIVKFQDVFLRSHASTKSSTLSVLLTVVGVLIYFIVNSGFFSVRLLLSLVFINLTSPVGMHLISRAAYRNGAYMYRKDDASRQSTILLSQKEFNTPEELKKRAKLREERREKLYYKEKEYINKMDD</sequence>
<feature type="chain" id="PRO_0000372187" description="Putative antiporter subunit mnhG2">
    <location>
        <begin position="1"/>
        <end position="154"/>
    </location>
</feature>
<feature type="transmembrane region" description="Helical" evidence="2">
    <location>
        <begin position="11"/>
        <end position="31"/>
    </location>
</feature>
<feature type="transmembrane region" description="Helical" evidence="2">
    <location>
        <begin position="51"/>
        <end position="71"/>
    </location>
</feature>
<feature type="transmembrane region" description="Helical" evidence="2">
    <location>
        <begin position="72"/>
        <end position="92"/>
    </location>
</feature>
<evidence type="ECO:0000250" key="1"/>
<evidence type="ECO:0000255" key="2"/>
<evidence type="ECO:0000305" key="3"/>
<dbReference type="EMBL" id="CP000029">
    <property type="protein sequence ID" value="AAW53738.1"/>
    <property type="molecule type" value="Genomic_DNA"/>
</dbReference>
<dbReference type="RefSeq" id="WP_001832099.1">
    <property type="nucleotide sequence ID" value="NC_002976.3"/>
</dbReference>
<dbReference type="SMR" id="Q5HRA6"/>
<dbReference type="STRING" id="176279.SERP0287"/>
<dbReference type="GeneID" id="50019440"/>
<dbReference type="KEGG" id="ser:SERP0287"/>
<dbReference type="eggNOG" id="COG1320">
    <property type="taxonomic scope" value="Bacteria"/>
</dbReference>
<dbReference type="HOGENOM" id="CLU_121334_0_3_9"/>
<dbReference type="Proteomes" id="UP000000531">
    <property type="component" value="Chromosome"/>
</dbReference>
<dbReference type="GO" id="GO:0005886">
    <property type="term" value="C:plasma membrane"/>
    <property type="evidence" value="ECO:0007669"/>
    <property type="project" value="UniProtKB-SubCell"/>
</dbReference>
<dbReference type="GO" id="GO:0015385">
    <property type="term" value="F:sodium:proton antiporter activity"/>
    <property type="evidence" value="ECO:0007669"/>
    <property type="project" value="TreeGrafter"/>
</dbReference>
<dbReference type="InterPro" id="IPR005133">
    <property type="entry name" value="PhaG_MnhG_YufB"/>
</dbReference>
<dbReference type="NCBIfam" id="TIGR01300">
    <property type="entry name" value="CPA3_mnhG_phaG"/>
    <property type="match status" value="1"/>
</dbReference>
<dbReference type="NCBIfam" id="NF009236">
    <property type="entry name" value="PRK12586.1"/>
    <property type="match status" value="1"/>
</dbReference>
<dbReference type="PANTHER" id="PTHR34703">
    <property type="entry name" value="ANTIPORTER SUBUNIT MNHG2-RELATED"/>
    <property type="match status" value="1"/>
</dbReference>
<dbReference type="PANTHER" id="PTHR34703:SF1">
    <property type="entry name" value="ANTIPORTER SUBUNIT MNHG2-RELATED"/>
    <property type="match status" value="1"/>
</dbReference>
<dbReference type="Pfam" id="PF03334">
    <property type="entry name" value="PhaG_MnhG_YufB"/>
    <property type="match status" value="1"/>
</dbReference>
<keyword id="KW-0050">Antiport</keyword>
<keyword id="KW-1003">Cell membrane</keyword>
<keyword id="KW-0406">Ion transport</keyword>
<keyword id="KW-0472">Membrane</keyword>
<keyword id="KW-1185">Reference proteome</keyword>
<keyword id="KW-0812">Transmembrane</keyword>
<keyword id="KW-1133">Transmembrane helix</keyword>
<keyword id="KW-0813">Transport</keyword>
<gene>
    <name type="primary">mnhG2</name>
    <name type="synonym">mrpG2</name>
    <name type="ordered locus">SERP0287</name>
</gene>
<protein>
    <recommendedName>
        <fullName>Putative antiporter subunit mnhG2</fullName>
    </recommendedName>
    <alternativeName>
        <fullName>Mrp complex subunit G2</fullName>
    </alternativeName>
    <alternativeName>
        <fullName>Putative NADH-ubiquinone oxidoreductase subunit mnhF2</fullName>
    </alternativeName>
</protein>
<comment type="subunit">
    <text evidence="1">May form a heterooligomeric complex that consists of seven subunits: mnhA2, mnhB2, mnhC2, mnhD2, mnhE2, mnhF2 and mnhG2.</text>
</comment>
<comment type="subcellular location">
    <subcellularLocation>
        <location evidence="3">Cell membrane</location>
        <topology evidence="3">Multi-pass membrane protein</topology>
    </subcellularLocation>
</comment>
<comment type="similarity">
    <text evidence="3">Belongs to the CPA3 antiporters (TC 2.A.63) subunit G family.</text>
</comment>
<organism>
    <name type="scientific">Staphylococcus epidermidis (strain ATCC 35984 / DSM 28319 / BCRC 17069 / CCUG 31568 / BM 3577 / RP62A)</name>
    <dbReference type="NCBI Taxonomy" id="176279"/>
    <lineage>
        <taxon>Bacteria</taxon>
        <taxon>Bacillati</taxon>
        <taxon>Bacillota</taxon>
        <taxon>Bacilli</taxon>
        <taxon>Bacillales</taxon>
        <taxon>Staphylococcaceae</taxon>
        <taxon>Staphylococcus</taxon>
    </lineage>
</organism>
<reference key="1">
    <citation type="journal article" date="2005" name="J. Bacteriol.">
        <title>Insights on evolution of virulence and resistance from the complete genome analysis of an early methicillin-resistant Staphylococcus aureus strain and a biofilm-producing methicillin-resistant Staphylococcus epidermidis strain.</title>
        <authorList>
            <person name="Gill S.R."/>
            <person name="Fouts D.E."/>
            <person name="Archer G.L."/>
            <person name="Mongodin E.F."/>
            <person name="DeBoy R.T."/>
            <person name="Ravel J."/>
            <person name="Paulsen I.T."/>
            <person name="Kolonay J.F."/>
            <person name="Brinkac L.M."/>
            <person name="Beanan M.J."/>
            <person name="Dodson R.J."/>
            <person name="Daugherty S.C."/>
            <person name="Madupu R."/>
            <person name="Angiuoli S.V."/>
            <person name="Durkin A.S."/>
            <person name="Haft D.H."/>
            <person name="Vamathevan J.J."/>
            <person name="Khouri H."/>
            <person name="Utterback T.R."/>
            <person name="Lee C."/>
            <person name="Dimitrov G."/>
            <person name="Jiang L."/>
            <person name="Qin H."/>
            <person name="Weidman J."/>
            <person name="Tran K."/>
            <person name="Kang K.H."/>
            <person name="Hance I.R."/>
            <person name="Nelson K.E."/>
            <person name="Fraser C.M."/>
        </authorList>
    </citation>
    <scope>NUCLEOTIDE SEQUENCE [LARGE SCALE GENOMIC DNA]</scope>
    <source>
        <strain>ATCC 35984 / DSM 28319 / BCRC 17069 / CCUG 31568 / BM 3577 / RP62A</strain>
    </source>
</reference>
<proteinExistence type="inferred from homology"/>
<name>MNHG2_STAEQ</name>
<accession>Q5HRA6</accession>